<feature type="chain" id="PRO_0000265252" description="Large ribosomal subunit protein uL6">
    <location>
        <begin position="1"/>
        <end position="177"/>
    </location>
</feature>
<feature type="modified residue" description="N6-acetyllysine" evidence="1">
    <location>
        <position position="44"/>
    </location>
</feature>
<sequence>MSRVAKAPVVVPAGVDVKINGQVITIKGKNGELTRTLNDAVEVKHADNTLTFGPRDGYADGWAQAGTARALLNSMVIGVTEGFTKKLQLVGVGYRAAVKGNVINLSLGFSHPVDHQLPAGITAECPTQTEIVLKGADKQVIGQVAADLRAYRRPEPYKGKGVRYADEVVRTKEAKKK</sequence>
<accession>Q0TCF6</accession>
<gene>
    <name evidence="1" type="primary">rplF</name>
    <name type="ordered locus">ECP_3393</name>
</gene>
<dbReference type="EMBL" id="CP000247">
    <property type="protein sequence ID" value="ABG71373.1"/>
    <property type="molecule type" value="Genomic_DNA"/>
</dbReference>
<dbReference type="RefSeq" id="WP_000091945.1">
    <property type="nucleotide sequence ID" value="NC_008253.1"/>
</dbReference>
<dbReference type="SMR" id="Q0TCF6"/>
<dbReference type="GeneID" id="86948169"/>
<dbReference type="KEGG" id="ecp:ECP_3393"/>
<dbReference type="HOGENOM" id="CLU_065464_1_2_6"/>
<dbReference type="Proteomes" id="UP000009182">
    <property type="component" value="Chromosome"/>
</dbReference>
<dbReference type="GO" id="GO:0022625">
    <property type="term" value="C:cytosolic large ribosomal subunit"/>
    <property type="evidence" value="ECO:0007669"/>
    <property type="project" value="TreeGrafter"/>
</dbReference>
<dbReference type="GO" id="GO:0019843">
    <property type="term" value="F:rRNA binding"/>
    <property type="evidence" value="ECO:0007669"/>
    <property type="project" value="UniProtKB-UniRule"/>
</dbReference>
<dbReference type="GO" id="GO:0003735">
    <property type="term" value="F:structural constituent of ribosome"/>
    <property type="evidence" value="ECO:0007669"/>
    <property type="project" value="InterPro"/>
</dbReference>
<dbReference type="GO" id="GO:0002181">
    <property type="term" value="P:cytoplasmic translation"/>
    <property type="evidence" value="ECO:0007669"/>
    <property type="project" value="TreeGrafter"/>
</dbReference>
<dbReference type="FunFam" id="3.90.930.12:FF:000001">
    <property type="entry name" value="50S ribosomal protein L6"/>
    <property type="match status" value="1"/>
</dbReference>
<dbReference type="FunFam" id="3.90.930.12:FF:000002">
    <property type="entry name" value="50S ribosomal protein L6"/>
    <property type="match status" value="1"/>
</dbReference>
<dbReference type="Gene3D" id="3.90.930.12">
    <property type="entry name" value="Ribosomal protein L6, alpha-beta domain"/>
    <property type="match status" value="2"/>
</dbReference>
<dbReference type="HAMAP" id="MF_01365_B">
    <property type="entry name" value="Ribosomal_uL6_B"/>
    <property type="match status" value="1"/>
</dbReference>
<dbReference type="InterPro" id="IPR000702">
    <property type="entry name" value="Ribosomal_uL6-like"/>
</dbReference>
<dbReference type="InterPro" id="IPR036789">
    <property type="entry name" value="Ribosomal_uL6-like_a/b-dom_sf"/>
</dbReference>
<dbReference type="InterPro" id="IPR020040">
    <property type="entry name" value="Ribosomal_uL6_a/b-dom"/>
</dbReference>
<dbReference type="InterPro" id="IPR019906">
    <property type="entry name" value="Ribosomal_uL6_bac-type"/>
</dbReference>
<dbReference type="InterPro" id="IPR002358">
    <property type="entry name" value="Ribosomal_uL6_CS"/>
</dbReference>
<dbReference type="NCBIfam" id="TIGR03654">
    <property type="entry name" value="L6_bact"/>
    <property type="match status" value="1"/>
</dbReference>
<dbReference type="PANTHER" id="PTHR11655">
    <property type="entry name" value="60S/50S RIBOSOMAL PROTEIN L6/L9"/>
    <property type="match status" value="1"/>
</dbReference>
<dbReference type="PANTHER" id="PTHR11655:SF14">
    <property type="entry name" value="LARGE RIBOSOMAL SUBUNIT PROTEIN UL6M"/>
    <property type="match status" value="1"/>
</dbReference>
<dbReference type="Pfam" id="PF00347">
    <property type="entry name" value="Ribosomal_L6"/>
    <property type="match status" value="2"/>
</dbReference>
<dbReference type="PIRSF" id="PIRSF002162">
    <property type="entry name" value="Ribosomal_L6"/>
    <property type="match status" value="1"/>
</dbReference>
<dbReference type="PRINTS" id="PR00059">
    <property type="entry name" value="RIBOSOMALL6"/>
</dbReference>
<dbReference type="SUPFAM" id="SSF56053">
    <property type="entry name" value="Ribosomal protein L6"/>
    <property type="match status" value="2"/>
</dbReference>
<dbReference type="PROSITE" id="PS00525">
    <property type="entry name" value="RIBOSOMAL_L6_1"/>
    <property type="match status" value="1"/>
</dbReference>
<proteinExistence type="inferred from homology"/>
<reference key="1">
    <citation type="journal article" date="2006" name="Mol. Microbiol.">
        <title>Role of pathogenicity island-associated integrases in the genome plasticity of uropathogenic Escherichia coli strain 536.</title>
        <authorList>
            <person name="Hochhut B."/>
            <person name="Wilde C."/>
            <person name="Balling G."/>
            <person name="Middendorf B."/>
            <person name="Dobrindt U."/>
            <person name="Brzuszkiewicz E."/>
            <person name="Gottschalk G."/>
            <person name="Carniel E."/>
            <person name="Hacker J."/>
        </authorList>
    </citation>
    <scope>NUCLEOTIDE SEQUENCE [LARGE SCALE GENOMIC DNA]</scope>
    <source>
        <strain>536 / UPEC</strain>
    </source>
</reference>
<organism>
    <name type="scientific">Escherichia coli O6:K15:H31 (strain 536 / UPEC)</name>
    <dbReference type="NCBI Taxonomy" id="362663"/>
    <lineage>
        <taxon>Bacteria</taxon>
        <taxon>Pseudomonadati</taxon>
        <taxon>Pseudomonadota</taxon>
        <taxon>Gammaproteobacteria</taxon>
        <taxon>Enterobacterales</taxon>
        <taxon>Enterobacteriaceae</taxon>
        <taxon>Escherichia</taxon>
    </lineage>
</organism>
<evidence type="ECO:0000255" key="1">
    <source>
        <dbReference type="HAMAP-Rule" id="MF_01365"/>
    </source>
</evidence>
<evidence type="ECO:0000305" key="2"/>
<name>RL6_ECOL5</name>
<protein>
    <recommendedName>
        <fullName evidence="1">Large ribosomal subunit protein uL6</fullName>
    </recommendedName>
    <alternativeName>
        <fullName evidence="2">50S ribosomal protein L6</fullName>
    </alternativeName>
</protein>
<keyword id="KW-0007">Acetylation</keyword>
<keyword id="KW-0687">Ribonucleoprotein</keyword>
<keyword id="KW-0689">Ribosomal protein</keyword>
<keyword id="KW-0694">RNA-binding</keyword>
<keyword id="KW-0699">rRNA-binding</keyword>
<comment type="function">
    <text evidence="1">This protein binds to the 23S rRNA, and is important in its secondary structure. It is located near the subunit interface in the base of the L7/L12 stalk, and near the tRNA binding site of the peptidyltransferase center.</text>
</comment>
<comment type="subunit">
    <text evidence="1">Part of the 50S ribosomal subunit.</text>
</comment>
<comment type="similarity">
    <text evidence="1">Belongs to the universal ribosomal protein uL6 family.</text>
</comment>